<sequence length="666" mass="77081">MTSSSLFREGELGHFCLNKQEMLHLNVTNPNSIYIEGKLSFEGYKSFNIHCYVDTGASLCIASRYIIPEELWENSPKDIQVKIANQELIKITKVCKNLKVKFAGKSFEIPTVYQQETGIDFLIGNNFCRLYNPFIQWEDRIAFHLKNEMVLIKKVTKAFSVSNPSFLENMKKDSKTEQIPGTNISKNIINPEERYFLITEKYQKIEQLLDKVCSENPIDPIKSKQWMKASIKLIDPLKVIRVKPMSYSPQDREGFAKQIKELLDLGLIIPSKSQHMSPAFLVENEAERRRGKKRMVVNYKAINQATIGDSHNLPNMQELLTLLRGKSIFSSFDCKSGFWQVVLDEESQKLTAFTCPQGHFQWKVVPFGLKQAPSIFQRHMQTALNGADKFCMVYVDDIIVFSNSELDHYNHVYAVLKIVEKYGIILSKKKANLFKEKINFLGLEIDKGTHCPQNHILENIHKFPDRLEDKKHLQRFLGVLTYAETYIPKLAEIRKPLQVKLKKDVTWNWTQSDSDYVKKIKKNLGSFPKLYLPKPEDHLIIETDASDSFWGGVLKARALDGVELICRYSSGSFKQAEKNYHSNDKELLAVKQVITKFSAYLTPVRFTVRTDNKNFTYFLRINLKGDSKQGRLVRWQNWFSKYQFDVEHLEGVKNVLADCLTRDFNA</sequence>
<name>POL_FMVD</name>
<accession>P09523</accession>
<gene>
    <name type="ORF">ORF V</name>
</gene>
<reference key="1">
    <citation type="journal article" date="1987" name="Nucleic Acids Res.">
        <title>Sequence of figwort mosaic virus DNA (caulimovirus group).</title>
        <authorList>
            <person name="Richins R.D."/>
            <person name="Scholthof H.B."/>
            <person name="Shepherd R.J."/>
        </authorList>
    </citation>
    <scope>NUCLEOTIDE SEQUENCE [GENOMIC DNA]</scope>
</reference>
<comment type="function">
    <text evidence="1">Encodes for at least two polypeptides: protease (PR) and reverse transcriptase (RT). The protease processes the polyprotein in cis. Reverse transcriptase is multifunctional enzyme that converts the viral RNA genome into dsDNA in viral cytoplasmic capsids. This enzyme displays a DNA polymerase activity that can copy either DNA or RNA templates, and a ribonuclease H (RNase H) activity that cleaves the RNA strand of RNA-DNA heteroduplexes in a partially processive 3'- to 5'-endonucleasic mode. Neo-synthesized pregenomic RNA (pgRNA) are encapsidated, and reverse-transcribed inside the nucleocapsid. Partial (+)DNA is synthesized from the (-)DNA template and generates the relaxed circular DNA (RC-DNA) genome. After budding and infection, the RC-DNA migrates in the nucleus, and is converted into a plasmid-like covalently closed circular DNA (cccDNA) (By similarity).</text>
</comment>
<comment type="catalytic activity">
    <reaction evidence="2">
        <text>DNA(n) + a 2'-deoxyribonucleoside 5'-triphosphate = DNA(n+1) + diphosphate</text>
        <dbReference type="Rhea" id="RHEA:22508"/>
        <dbReference type="Rhea" id="RHEA-COMP:17339"/>
        <dbReference type="Rhea" id="RHEA-COMP:17340"/>
        <dbReference type="ChEBI" id="CHEBI:33019"/>
        <dbReference type="ChEBI" id="CHEBI:61560"/>
        <dbReference type="ChEBI" id="CHEBI:173112"/>
        <dbReference type="EC" id="2.7.7.49"/>
    </reaction>
</comment>
<comment type="domain">
    <text evidence="1">The polymerase/reverse transcriptase (RT) and ribonuclease H (RH) domains are structured in five subdomains: finger, palm, thumb, connection and RNase H. Within the palm subdomain, the 'primer grip' region is thought to be involved in the positioning of the primer terminus for accommodating the incoming nucleotide. The RH domain stabilizes the association of RT with primer-template (By similarity).</text>
</comment>
<comment type="similarity">
    <text evidence="3">Belongs to the caulimoviridae enzymatic polyprotein family.</text>
</comment>
<organism>
    <name type="scientific">Figwort mosaic virus (strain DxS)</name>
    <name type="common">FMV</name>
    <dbReference type="NCBI Taxonomy" id="10650"/>
    <lineage>
        <taxon>Viruses</taxon>
        <taxon>Riboviria</taxon>
        <taxon>Pararnavirae</taxon>
        <taxon>Artverviricota</taxon>
        <taxon>Revtraviricetes</taxon>
        <taxon>Ortervirales</taxon>
        <taxon>Caulimoviridae</taxon>
        <taxon>Caulimovirus</taxon>
        <taxon>Caulimovirus tesselloscrophulariae</taxon>
    </lineage>
</organism>
<proteinExistence type="inferred from homology"/>
<keyword id="KW-0064">Aspartyl protease</keyword>
<keyword id="KW-0255">Endonuclease</keyword>
<keyword id="KW-0378">Hydrolase</keyword>
<keyword id="KW-0540">Nuclease</keyword>
<keyword id="KW-0548">Nucleotidyltransferase</keyword>
<keyword id="KW-0645">Protease</keyword>
<keyword id="KW-1185">Reference proteome</keyword>
<keyword id="KW-0695">RNA-directed DNA polymerase</keyword>
<keyword id="KW-0808">Transferase</keyword>
<evidence type="ECO:0000250" key="1"/>
<evidence type="ECO:0000255" key="2">
    <source>
        <dbReference type="PROSITE-ProRule" id="PRU00405"/>
    </source>
</evidence>
<evidence type="ECO:0000305" key="3"/>
<dbReference type="EC" id="3.4.23.-"/>
<dbReference type="EC" id="2.7.7.49"/>
<dbReference type="EMBL" id="X06166">
    <property type="protein sequence ID" value="CAA29527.1"/>
    <property type="molecule type" value="Genomic_DNA"/>
</dbReference>
<dbReference type="PIR" id="S01283">
    <property type="entry name" value="S01283"/>
</dbReference>
<dbReference type="RefSeq" id="NP_619548.1">
    <property type="nucleotide sequence ID" value="NC_003554.1"/>
</dbReference>
<dbReference type="SMR" id="P09523"/>
<dbReference type="MEROPS" id="A03.001"/>
<dbReference type="KEGG" id="vg:940156"/>
<dbReference type="Proteomes" id="UP000008622">
    <property type="component" value="Segment"/>
</dbReference>
<dbReference type="GO" id="GO:0004190">
    <property type="term" value="F:aspartic-type endopeptidase activity"/>
    <property type="evidence" value="ECO:0007669"/>
    <property type="project" value="UniProtKB-KW"/>
</dbReference>
<dbReference type="GO" id="GO:0004519">
    <property type="term" value="F:endonuclease activity"/>
    <property type="evidence" value="ECO:0007669"/>
    <property type="project" value="UniProtKB-KW"/>
</dbReference>
<dbReference type="GO" id="GO:0003964">
    <property type="term" value="F:RNA-directed DNA polymerase activity"/>
    <property type="evidence" value="ECO:0007669"/>
    <property type="project" value="UniProtKB-KW"/>
</dbReference>
<dbReference type="GO" id="GO:0006508">
    <property type="term" value="P:proteolysis"/>
    <property type="evidence" value="ECO:0007669"/>
    <property type="project" value="UniProtKB-KW"/>
</dbReference>
<dbReference type="CDD" id="cd09274">
    <property type="entry name" value="RNase_HI_RT_Ty3"/>
    <property type="match status" value="1"/>
</dbReference>
<dbReference type="CDD" id="cd01647">
    <property type="entry name" value="RT_LTR"/>
    <property type="match status" value="1"/>
</dbReference>
<dbReference type="Gene3D" id="3.30.70.270">
    <property type="match status" value="2"/>
</dbReference>
<dbReference type="Gene3D" id="2.40.70.10">
    <property type="entry name" value="Acid Proteases"/>
    <property type="match status" value="1"/>
</dbReference>
<dbReference type="Gene3D" id="3.10.10.10">
    <property type="entry name" value="HIV Type 1 Reverse Transcriptase, subunit A, domain 1"/>
    <property type="match status" value="1"/>
</dbReference>
<dbReference type="InterPro" id="IPR043502">
    <property type="entry name" value="DNA/RNA_pol_sf"/>
</dbReference>
<dbReference type="InterPro" id="IPR000588">
    <property type="entry name" value="Pept_A3A"/>
</dbReference>
<dbReference type="InterPro" id="IPR021109">
    <property type="entry name" value="Peptidase_aspartic_dom_sf"/>
</dbReference>
<dbReference type="InterPro" id="IPR043128">
    <property type="entry name" value="Rev_trsase/Diguanyl_cyclase"/>
</dbReference>
<dbReference type="InterPro" id="IPR000477">
    <property type="entry name" value="RT_dom"/>
</dbReference>
<dbReference type="InterPro" id="IPR041373">
    <property type="entry name" value="RT_RNaseH"/>
</dbReference>
<dbReference type="InterPro" id="IPR051320">
    <property type="entry name" value="Viral_Replic_Matur_Polypro"/>
</dbReference>
<dbReference type="PANTHER" id="PTHR33064">
    <property type="entry name" value="POL PROTEIN"/>
    <property type="match status" value="1"/>
</dbReference>
<dbReference type="PANTHER" id="PTHR33064:SF37">
    <property type="entry name" value="RIBONUCLEASE H"/>
    <property type="match status" value="1"/>
</dbReference>
<dbReference type="Pfam" id="PF02160">
    <property type="entry name" value="Peptidase_A3"/>
    <property type="match status" value="1"/>
</dbReference>
<dbReference type="Pfam" id="PF17917">
    <property type="entry name" value="RT_RNaseH"/>
    <property type="match status" value="1"/>
</dbReference>
<dbReference type="Pfam" id="PF00078">
    <property type="entry name" value="RVT_1"/>
    <property type="match status" value="1"/>
</dbReference>
<dbReference type="PRINTS" id="PR00731">
    <property type="entry name" value="CAULIMOPTASE"/>
</dbReference>
<dbReference type="SUPFAM" id="SSF56672">
    <property type="entry name" value="DNA/RNA polymerases"/>
    <property type="match status" value="1"/>
</dbReference>
<dbReference type="PROSITE" id="PS50878">
    <property type="entry name" value="RT_POL"/>
    <property type="match status" value="1"/>
</dbReference>
<organismHost>
    <name type="scientific">Scrophularia californica</name>
    <name type="common">California bee plant</name>
    <dbReference type="NCBI Taxonomy" id="46031"/>
</organismHost>
<protein>
    <recommendedName>
        <fullName>Enzymatic polyprotein</fullName>
    </recommendedName>
    <domain>
        <recommendedName>
            <fullName>Aspartic protease</fullName>
            <ecNumber>3.4.23.-</ecNumber>
        </recommendedName>
    </domain>
    <domain>
        <recommendedName>
            <fullName>Endonuclease</fullName>
        </recommendedName>
    </domain>
    <domain>
        <recommendedName>
            <fullName>Reverse transcriptase</fullName>
            <ecNumber>2.7.7.49</ecNumber>
        </recommendedName>
    </domain>
</protein>
<feature type="chain" id="PRO_0000222056" description="Enzymatic polyprotein">
    <location>
        <begin position="1"/>
        <end position="666"/>
    </location>
</feature>
<feature type="domain" description="Reverse transcriptase" evidence="2">
    <location>
        <begin position="215"/>
        <end position="445"/>
    </location>
</feature>
<feature type="active site">
    <location>
        <position position="54"/>
    </location>
</feature>